<protein>
    <recommendedName>
        <fullName evidence="1">Succinylglutamate desuccinylase</fullName>
        <ecNumber evidence="1">3.5.1.96</ecNumber>
    </recommendedName>
</protein>
<comment type="function">
    <text evidence="1">Transforms N(2)-succinylglutamate into succinate and glutamate.</text>
</comment>
<comment type="catalytic activity">
    <reaction evidence="1">
        <text>N-succinyl-L-glutamate + H2O = L-glutamate + succinate</text>
        <dbReference type="Rhea" id="RHEA:15169"/>
        <dbReference type="ChEBI" id="CHEBI:15377"/>
        <dbReference type="ChEBI" id="CHEBI:29985"/>
        <dbReference type="ChEBI" id="CHEBI:30031"/>
        <dbReference type="ChEBI" id="CHEBI:58763"/>
        <dbReference type="EC" id="3.5.1.96"/>
    </reaction>
</comment>
<comment type="cofactor">
    <cofactor evidence="1">
        <name>Zn(2+)</name>
        <dbReference type="ChEBI" id="CHEBI:29105"/>
    </cofactor>
    <text evidence="1">Binds 1 zinc ion per subunit.</text>
</comment>
<comment type="pathway">
    <text evidence="1">Amino-acid degradation; L-arginine degradation via AST pathway; L-glutamate and succinate from L-arginine: step 5/5.</text>
</comment>
<comment type="similarity">
    <text evidence="1">Belongs to the AspA/AstE family. Succinylglutamate desuccinylase subfamily.</text>
</comment>
<reference key="1">
    <citation type="journal article" date="2008" name="DNA Res.">
        <title>Complete genome sequence and comparative analysis of the wild-type commensal Escherichia coli strain SE11 isolated from a healthy adult.</title>
        <authorList>
            <person name="Oshima K."/>
            <person name="Toh H."/>
            <person name="Ogura Y."/>
            <person name="Sasamoto H."/>
            <person name="Morita H."/>
            <person name="Park S.-H."/>
            <person name="Ooka T."/>
            <person name="Iyoda S."/>
            <person name="Taylor T.D."/>
            <person name="Hayashi T."/>
            <person name="Itoh K."/>
            <person name="Hattori M."/>
        </authorList>
    </citation>
    <scope>NUCLEOTIDE SEQUENCE [LARGE SCALE GENOMIC DNA]</scope>
    <source>
        <strain>SE11</strain>
    </source>
</reference>
<dbReference type="EC" id="3.5.1.96" evidence="1"/>
<dbReference type="EMBL" id="AP009240">
    <property type="protein sequence ID" value="BAG77438.1"/>
    <property type="molecule type" value="Genomic_DNA"/>
</dbReference>
<dbReference type="RefSeq" id="WP_000368506.1">
    <property type="nucleotide sequence ID" value="NC_011415.1"/>
</dbReference>
<dbReference type="SMR" id="B6IBG4"/>
<dbReference type="KEGG" id="ecy:ECSE_1914"/>
<dbReference type="HOGENOM" id="CLU_071608_0_0_6"/>
<dbReference type="UniPathway" id="UPA00185">
    <property type="reaction ID" value="UER00283"/>
</dbReference>
<dbReference type="Proteomes" id="UP000008199">
    <property type="component" value="Chromosome"/>
</dbReference>
<dbReference type="GO" id="GO:0016788">
    <property type="term" value="F:hydrolase activity, acting on ester bonds"/>
    <property type="evidence" value="ECO:0007669"/>
    <property type="project" value="UniProtKB-UniRule"/>
</dbReference>
<dbReference type="GO" id="GO:0009017">
    <property type="term" value="F:succinylglutamate desuccinylase activity"/>
    <property type="evidence" value="ECO:0007669"/>
    <property type="project" value="UniProtKB-EC"/>
</dbReference>
<dbReference type="GO" id="GO:0008270">
    <property type="term" value="F:zinc ion binding"/>
    <property type="evidence" value="ECO:0007669"/>
    <property type="project" value="UniProtKB-UniRule"/>
</dbReference>
<dbReference type="GO" id="GO:0019544">
    <property type="term" value="P:arginine catabolic process to glutamate"/>
    <property type="evidence" value="ECO:0007669"/>
    <property type="project" value="UniProtKB-UniRule"/>
</dbReference>
<dbReference type="GO" id="GO:0019545">
    <property type="term" value="P:arginine catabolic process to succinate"/>
    <property type="evidence" value="ECO:0007669"/>
    <property type="project" value="UniProtKB-UniRule"/>
</dbReference>
<dbReference type="CDD" id="cd03855">
    <property type="entry name" value="M14_ASTE"/>
    <property type="match status" value="1"/>
</dbReference>
<dbReference type="FunFam" id="3.40.630.10:FF:000017">
    <property type="entry name" value="Succinylglutamate desuccinylase"/>
    <property type="match status" value="1"/>
</dbReference>
<dbReference type="Gene3D" id="3.40.630.10">
    <property type="entry name" value="Zn peptidases"/>
    <property type="match status" value="1"/>
</dbReference>
<dbReference type="HAMAP" id="MF_00767">
    <property type="entry name" value="Arg_catab_AstE"/>
    <property type="match status" value="1"/>
</dbReference>
<dbReference type="InterPro" id="IPR050178">
    <property type="entry name" value="AspA/AstE_fam"/>
</dbReference>
<dbReference type="InterPro" id="IPR055438">
    <property type="entry name" value="AstE_AspA_cat"/>
</dbReference>
<dbReference type="InterPro" id="IPR007036">
    <property type="entry name" value="Aste_AspA_hybrid_dom"/>
</dbReference>
<dbReference type="InterPro" id="IPR016681">
    <property type="entry name" value="SuccinylGlu_desuccinylase"/>
</dbReference>
<dbReference type="NCBIfam" id="TIGR03242">
    <property type="entry name" value="arg_catab_astE"/>
    <property type="match status" value="1"/>
</dbReference>
<dbReference type="NCBIfam" id="NF003706">
    <property type="entry name" value="PRK05324.1"/>
    <property type="match status" value="1"/>
</dbReference>
<dbReference type="PANTHER" id="PTHR15162">
    <property type="entry name" value="ASPARTOACYLASE"/>
    <property type="match status" value="1"/>
</dbReference>
<dbReference type="PANTHER" id="PTHR15162:SF7">
    <property type="entry name" value="SUCCINYLGLUTAMATE DESUCCINYLASE"/>
    <property type="match status" value="1"/>
</dbReference>
<dbReference type="Pfam" id="PF24827">
    <property type="entry name" value="AstE_AspA_cat"/>
    <property type="match status" value="1"/>
</dbReference>
<dbReference type="Pfam" id="PF04952">
    <property type="entry name" value="AstE_AspA_hybrid"/>
    <property type="match status" value="1"/>
</dbReference>
<dbReference type="PIRSF" id="PIRSF017020">
    <property type="entry name" value="AstE"/>
    <property type="match status" value="1"/>
</dbReference>
<dbReference type="SUPFAM" id="SSF53187">
    <property type="entry name" value="Zn-dependent exopeptidases"/>
    <property type="match status" value="1"/>
</dbReference>
<evidence type="ECO:0000255" key="1">
    <source>
        <dbReference type="HAMAP-Rule" id="MF_00767"/>
    </source>
</evidence>
<keyword id="KW-0056">Arginine metabolism</keyword>
<keyword id="KW-0378">Hydrolase</keyword>
<keyword id="KW-0479">Metal-binding</keyword>
<keyword id="KW-0862">Zinc</keyword>
<proteinExistence type="inferred from homology"/>
<organism>
    <name type="scientific">Escherichia coli (strain SE11)</name>
    <dbReference type="NCBI Taxonomy" id="409438"/>
    <lineage>
        <taxon>Bacteria</taxon>
        <taxon>Pseudomonadati</taxon>
        <taxon>Pseudomonadota</taxon>
        <taxon>Gammaproteobacteria</taxon>
        <taxon>Enterobacterales</taxon>
        <taxon>Enterobacteriaceae</taxon>
        <taxon>Escherichia</taxon>
    </lineage>
</organism>
<name>ASTE_ECOSE</name>
<gene>
    <name evidence="1" type="primary">astE</name>
    <name type="ordered locus">ECSE_1914</name>
</gene>
<sequence>MDNFLALTLTGKKPVITEREINGVRWRWLGDGVLELTPLTPPQGALVISAGIHGNETAPVEMLDALLGAISHGEIPLRWRLLVILGNPPALKQGKRYCHSDMNRMFGGRWQLFAESGETCRARELEQCLEDFYDQGKESVRWHLDLHTAIRGSLHPQFGVLPQRDIPWDEKFLTWLGAAGLEALVFHQEPGGTFTHFSARHFGALACTLELGKALPFGQNDLRQFAVTASAIAALLSGESVGIVRTPPLRYRVVSQITRHSPSFEMHMASDTLNFMPFEKGTLLAQDGEERFTVTHDVEYVLFPNPLVALGLRAGLMLEKIS</sequence>
<feature type="chain" id="PRO_1000133632" description="Succinylglutamate desuccinylase">
    <location>
        <begin position="1"/>
        <end position="322"/>
    </location>
</feature>
<feature type="active site" evidence="1">
    <location>
        <position position="210"/>
    </location>
</feature>
<feature type="binding site" evidence="1">
    <location>
        <position position="53"/>
    </location>
    <ligand>
        <name>Zn(2+)</name>
        <dbReference type="ChEBI" id="CHEBI:29105"/>
    </ligand>
</feature>
<feature type="binding site" evidence="1">
    <location>
        <position position="56"/>
    </location>
    <ligand>
        <name>Zn(2+)</name>
        <dbReference type="ChEBI" id="CHEBI:29105"/>
    </ligand>
</feature>
<feature type="binding site" evidence="1">
    <location>
        <position position="147"/>
    </location>
    <ligand>
        <name>Zn(2+)</name>
        <dbReference type="ChEBI" id="CHEBI:29105"/>
    </ligand>
</feature>
<accession>B6IBG4</accession>